<feature type="peptide" id="PRO_0000378741" description="Periviscerokinin-1" evidence="2">
    <location>
        <begin position="1"/>
        <end position="11"/>
    </location>
</feature>
<feature type="modified residue" description="Threonine amide" evidence="2">
    <location>
        <position position="11"/>
    </location>
</feature>
<evidence type="ECO:0000255" key="1"/>
<evidence type="ECO:0000269" key="2">
    <source>
    </source>
</evidence>
<evidence type="ECO:0000303" key="3">
    <source>
    </source>
</evidence>
<evidence type="ECO:0000305" key="4"/>
<organism>
    <name type="scientific">Eublaberus posticus</name>
    <name type="common">Golden cockroach</name>
    <dbReference type="NCBI Taxonomy" id="36951"/>
    <lineage>
        <taxon>Eukaryota</taxon>
        <taxon>Metazoa</taxon>
        <taxon>Ecdysozoa</taxon>
        <taxon>Arthropoda</taxon>
        <taxon>Hexapoda</taxon>
        <taxon>Insecta</taxon>
        <taxon>Pterygota</taxon>
        <taxon>Neoptera</taxon>
        <taxon>Polyneoptera</taxon>
        <taxon>Dictyoptera</taxon>
        <taxon>Blattodea</taxon>
        <taxon>Blaberoidea</taxon>
        <taxon>Blaberidae</taxon>
        <taxon>Blaberinae</taxon>
        <taxon>Eublaberus</taxon>
    </lineage>
</organism>
<comment type="function">
    <text evidence="4">Mediates visceral muscle contractile activity (myotropic activity).</text>
</comment>
<comment type="subcellular location">
    <subcellularLocation>
        <location evidence="4">Secreted</location>
    </subcellularLocation>
</comment>
<comment type="similarity">
    <text evidence="1">Belongs to the periviscerokinin family.</text>
</comment>
<reference evidence="4" key="1">
    <citation type="journal article" date="2009" name="BMC Evol. Biol.">
        <title>A proteomic approach for studying insect phylogeny: CAPA peptides of ancient insect taxa (Dictyoptera, Blattoptera) as a test case.</title>
        <authorList>
            <person name="Roth S."/>
            <person name="Fromm B."/>
            <person name="Gaede G."/>
            <person name="Predel R."/>
        </authorList>
    </citation>
    <scope>PROTEIN SEQUENCE</scope>
    <scope>AMIDATION AT THR-11</scope>
    <source>
        <tissue evidence="2">Abdominal perisympathetic organs</tissue>
    </source>
</reference>
<dbReference type="GO" id="GO:0005576">
    <property type="term" value="C:extracellular region"/>
    <property type="evidence" value="ECO:0007669"/>
    <property type="project" value="UniProtKB-SubCell"/>
</dbReference>
<dbReference type="GO" id="GO:0007218">
    <property type="term" value="P:neuropeptide signaling pathway"/>
    <property type="evidence" value="ECO:0007669"/>
    <property type="project" value="UniProtKB-KW"/>
</dbReference>
<dbReference type="InterPro" id="IPR013231">
    <property type="entry name" value="Periviscerokinin"/>
</dbReference>
<dbReference type="Pfam" id="PF08259">
    <property type="entry name" value="Periviscerokin"/>
    <property type="match status" value="1"/>
</dbReference>
<protein>
    <recommendedName>
        <fullName evidence="3">Periviscerokinin-1</fullName>
        <shortName evidence="3">EubPo-PVK-1</shortName>
    </recommendedName>
</protein>
<accession>P85620</accession>
<keyword id="KW-0027">Amidation</keyword>
<keyword id="KW-0903">Direct protein sequencing</keyword>
<keyword id="KW-0527">Neuropeptide</keyword>
<keyword id="KW-0964">Secreted</keyword>
<proteinExistence type="evidence at protein level"/>
<name>PVK1_EUBPO</name>
<sequence length="11" mass="1091">GSSGLIPFGRT</sequence>